<keyword id="KW-0025">Alternative splicing</keyword>
<keyword id="KW-0067">ATP-binding</keyword>
<keyword id="KW-0106">Calcium</keyword>
<keyword id="KW-0107">Calcium channel</keyword>
<keyword id="KW-0109">Calcium transport</keyword>
<keyword id="KW-0968">Cytoplasmic vesicle</keyword>
<keyword id="KW-0256">Endoplasmic reticulum</keyword>
<keyword id="KW-0407">Ion channel</keyword>
<keyword id="KW-0406">Ion transport</keyword>
<keyword id="KW-1071">Ligand-gated ion channel</keyword>
<keyword id="KW-0472">Membrane</keyword>
<keyword id="KW-0479">Metal-binding</keyword>
<keyword id="KW-0547">Nucleotide-binding</keyword>
<keyword id="KW-0597">Phosphoprotein</keyword>
<keyword id="KW-0675">Receptor</keyword>
<keyword id="KW-1185">Reference proteome</keyword>
<keyword id="KW-0677">Repeat</keyword>
<keyword id="KW-0812">Transmembrane</keyword>
<keyword id="KW-1133">Transmembrane helix</keyword>
<keyword id="KW-0813">Transport</keyword>
<keyword id="KW-0862">Zinc</keyword>
<comment type="function">
    <text evidence="8 9 10 11 12">Inositol 1,4,5-trisphosphate-gated calcium channel that upon inositol 1,4,5-trisphosphate binding transports calcium from the endoplasmic reticulum lumen to cytoplasm (PubMed:15632133, PubMed:19608738, PubMed:20189985, PubMed:22547632, PubMed:25329695). Exists in two states; a long-lived closed state where the channel is essentially 'parked' with only very rare visits to an open state and that ligands facilitate the transition from the 'parked' state into a 'drive' mode represented by periods of bursting activity (PubMed:22547632).</text>
</comment>
<comment type="function">
    <molecule>Isoform 3</molecule>
    <text evidence="8">Has neither inositol 1,4,5-trisphosphate binding activity nor calcium releasing activity.</text>
</comment>
<comment type="catalytic activity">
    <reaction evidence="8 9 10 11 12">
        <text>Ca(2+)(in) = Ca(2+)(out)</text>
        <dbReference type="Rhea" id="RHEA:29671"/>
        <dbReference type="ChEBI" id="CHEBI:29108"/>
    </reaction>
</comment>
<comment type="activity regulation">
    <text evidence="1 10 11">Inositol 1,4,5-trisphosphate-gated calcium channel activity is increased by cAMP that occurs independently of PKA activation (PubMed:20189985). ATP and cytosolic calcium modulate the open probability (Po) predominantly by facilitating extended 'bursting' activity of the channel (PubMed:22547632). Inositol 1,4,5-trisphosphate-gated calcium channel activity is inhibited by CALM1 in a calcium-dependent manner (By similarity).</text>
</comment>
<comment type="subunit">
    <text evidence="1 2 4">Homotetramer. Interacts with CABP1. Interacts with BOK; regulates ITPR2 expression. Interacts with BCL2L10 (By similarity). Interacts with TRPC4 (By similarity). Interacts with CHGA and CHGB (By similarity).</text>
</comment>
<comment type="subcellular location">
    <subcellularLocation>
        <location evidence="8">Endoplasmic reticulum membrane</location>
        <topology evidence="5">Multi-pass membrane protein</topology>
    </subcellularLocation>
    <subcellularLocation>
        <location evidence="4">Cytoplasmic vesicle</location>
        <location evidence="4">Secretory vesicle membrane</location>
        <topology evidence="5">Multi-pass membrane protein</topology>
    </subcellularLocation>
    <text evidence="8">Forms clusters on endoplasmic reticulum membrane upon inositol 1,4,5-trisphosphate binding.</text>
</comment>
<comment type="alternative products">
    <event type="alternative splicing"/>
    <isoform>
        <id>Q9Z329-1</id>
        <name>1</name>
        <name>Long</name>
        <sequence type="displayed"/>
    </isoform>
    <isoform>
        <id>Q9Z329-2</id>
        <name>2</name>
        <name>Short</name>
        <name>TIPR</name>
        <sequence type="described" ref="VSP_002701 VSP_002702"/>
    </isoform>
    <isoform>
        <id>Q9Z329-3</id>
        <name>3</name>
        <name>Itpr2v</name>
        <sequence type="described" ref="VSP_016026"/>
    </isoform>
</comment>
<comment type="tissue specificity">
    <text evidence="8">Isoforms 1 and 3 are widely expressed. Isoform 2 is found in skeletal muscle and heart.</text>
</comment>
<comment type="PTM">
    <text evidence="9">Phosphorylation by cAMP-dependent PKA on Ser-937 increases calcium release.</text>
</comment>
<comment type="PTM">
    <text evidence="1">Phosphorylation by CaMK2 on Ser-150 significantly decreases the channel open probability.</text>
</comment>
<comment type="disruption phenotype">
    <text evidence="12">There is a 3-fold reduction in the number of pilocarpine-responsive sweat glands in knockout animals (PubMed:25329695). The sweat glands of these animals show a significant reduction in Ca(2+) response following acetylcholine stimulation compared with those of wild-type animals (PubMed:25329695). The Itpr2-null animals retained some residual sweat production, in contrast to the human phenotype of anhidrosis (PubMed:25329695). This phenotypic discrepancy may be due to differences between humans and mice in the expression of the 3 ITPR isoforms, as well as to the different stimuli used to provoke sweat production in Itpr2-null animals (PubMed:25329695).</text>
</comment>
<comment type="similarity">
    <text evidence="15">Belongs to the InsP3 receptor family.</text>
</comment>
<organism>
    <name type="scientific">Mus musculus</name>
    <name type="common">Mouse</name>
    <dbReference type="NCBI Taxonomy" id="10090"/>
    <lineage>
        <taxon>Eukaryota</taxon>
        <taxon>Metazoa</taxon>
        <taxon>Chordata</taxon>
        <taxon>Craniata</taxon>
        <taxon>Vertebrata</taxon>
        <taxon>Euteleostomi</taxon>
        <taxon>Mammalia</taxon>
        <taxon>Eutheria</taxon>
        <taxon>Euarchontoglires</taxon>
        <taxon>Glires</taxon>
        <taxon>Rodentia</taxon>
        <taxon>Myomorpha</taxon>
        <taxon>Muroidea</taxon>
        <taxon>Muridae</taxon>
        <taxon>Murinae</taxon>
        <taxon>Mus</taxon>
        <taxon>Mus</taxon>
    </lineage>
</organism>
<protein>
    <recommendedName>
        <fullName evidence="15">Inositol 1,4,5-trisphosphate-gated calcium channel ITPR2</fullName>
    </recommendedName>
    <alternativeName>
        <fullName>IP3 receptor isoform 2</fullName>
        <shortName>IP3R 2</shortName>
        <shortName>InsP3R2</shortName>
    </alternativeName>
    <alternativeName>
        <fullName>Inositol 1,4,5-trisphosphate receptor type 2</fullName>
    </alternativeName>
    <alternativeName>
        <fullName>Inositol 1,4,5-trisphosphate type V receptor</fullName>
    </alternativeName>
    <alternativeName>
        <fullName>Type 2 inositol 1,4,5-trisphosphate receptor</fullName>
        <shortName>Type 2 InsP3 receptor</shortName>
    </alternativeName>
</protein>
<reference key="1">
    <citation type="journal article" date="2005" name="J. Biol. Chem.">
        <title>Molecular cloning of mouse type 2 and type 3 inositol 1,4,5-trisphosphate receptors and identification of a novel type 2 receptor splice variant.</title>
        <authorList>
            <person name="Iwai M."/>
            <person name="Tateishi Y."/>
            <person name="Hattori M."/>
            <person name="Mizutani A."/>
            <person name="Nakamura T."/>
            <person name="Futatsugi A."/>
            <person name="Inoue T."/>
            <person name="Furuichi T."/>
            <person name="Michikawa T."/>
            <person name="Mikoshiba K."/>
        </authorList>
    </citation>
    <scope>NUCLEOTIDE SEQUENCE [MRNA] (ISOFORMS 1 AND 3)</scope>
    <scope>FUNCTION</scope>
    <scope>TRANSPORTER ACTIVITY</scope>
    <scope>TISSUE SPECIFICITY</scope>
    <scope>SUBCELLULAR LOCATION</scope>
    <scope>MUTAGENESIS OF LYS-507 AND ARG-510</scope>
    <source>
        <strain>C57BL/6J</strain>
        <tissue>Lung</tissue>
    </source>
</reference>
<reference key="2">
    <citation type="journal article" date="1998" name="Biochem. J.">
        <title>Muscle-specific mRNA isoform encodes a protein composed mainly of the N-terminal 175 residues of type 2 Ins(1,4,5)P3 receptor.</title>
        <authorList>
            <person name="Futatsugi A."/>
            <person name="Kuwajima G."/>
            <person name="Mikoshiba K."/>
        </authorList>
    </citation>
    <scope>NUCLEOTIDE SEQUENCE [MRNA] (ISOFORM 2)</scope>
    <source>
        <tissue>Heart</tissue>
    </source>
</reference>
<reference key="3">
    <citation type="journal article" date="2010" name="J. Biol. Chem.">
        <title>Regulation of inositol 1,4,5-trisphosphate receptors by cAMP independent of cAMP-dependent protein kinase.</title>
        <authorList>
            <person name="Tovey S.C."/>
            <person name="Dedos S.G."/>
            <person name="Rahman T."/>
            <person name="Taylor E.J."/>
            <person name="Pantazaka E."/>
            <person name="Taylor C.W."/>
        </authorList>
    </citation>
    <scope>NUCLEOTIDE SEQUENCE [MRNA]</scope>
    <scope>FUNCTION</scope>
    <scope>TRANSPORTER ACTIVITY</scope>
    <scope>ACTIVITY REGULATION</scope>
</reference>
<reference key="4">
    <citation type="journal article" date="2009" name="PLoS Biol.">
        <title>Lineage-specific biology revealed by a finished genome assembly of the mouse.</title>
        <authorList>
            <person name="Church D.M."/>
            <person name="Goodstadt L."/>
            <person name="Hillier L.W."/>
            <person name="Zody M.C."/>
            <person name="Goldstein S."/>
            <person name="She X."/>
            <person name="Bult C.J."/>
            <person name="Agarwala R."/>
            <person name="Cherry J.L."/>
            <person name="DiCuccio M."/>
            <person name="Hlavina W."/>
            <person name="Kapustin Y."/>
            <person name="Meric P."/>
            <person name="Maglott D."/>
            <person name="Birtle Z."/>
            <person name="Marques A.C."/>
            <person name="Graves T."/>
            <person name="Zhou S."/>
            <person name="Teague B."/>
            <person name="Potamousis K."/>
            <person name="Churas C."/>
            <person name="Place M."/>
            <person name="Herschleb J."/>
            <person name="Runnheim R."/>
            <person name="Forrest D."/>
            <person name="Amos-Landgraf J."/>
            <person name="Schwartz D.C."/>
            <person name="Cheng Z."/>
            <person name="Lindblad-Toh K."/>
            <person name="Eichler E.E."/>
            <person name="Ponting C.P."/>
        </authorList>
    </citation>
    <scope>NUCLEOTIDE SEQUENCE [LARGE SCALE GENOMIC DNA]</scope>
    <source>
        <strain>C57BL/6J</strain>
    </source>
</reference>
<reference key="5">
    <citation type="submission" date="2005-07" db="EMBL/GenBank/DDBJ databases">
        <authorList>
            <person name="Mural R.J."/>
            <person name="Adams M.D."/>
            <person name="Myers E.W."/>
            <person name="Smith H.O."/>
            <person name="Venter J.C."/>
        </authorList>
    </citation>
    <scope>NUCLEOTIDE SEQUENCE [LARGE SCALE GENOMIC DNA]</scope>
</reference>
<reference key="6">
    <citation type="journal article" date="2004" name="Genome Res.">
        <title>The status, quality, and expansion of the NIH full-length cDNA project: the Mammalian Gene Collection (MGC).</title>
        <authorList>
            <consortium name="The MGC Project Team"/>
        </authorList>
    </citation>
    <scope>NUCLEOTIDE SEQUENCE [LARGE SCALE MRNA] OF 1290-2701</scope>
    <source>
        <strain>Czech II</strain>
        <tissue>Mammary tumor</tissue>
    </source>
</reference>
<reference key="7">
    <citation type="journal article" date="1994" name="J. Biol. Chem.">
        <title>Determination of relative amounts of inositol trisphosphate receptor mRNA isoforms by ratio polymerase chain reaction.</title>
        <authorList>
            <person name="De Smedt H."/>
            <person name="Missiaen L."/>
            <person name="Parys J.B."/>
            <person name="Bootman M.D."/>
            <person name="Mertens L."/>
            <person name="Van Den Bosch L."/>
            <person name="Casteels R."/>
        </authorList>
    </citation>
    <scope>NUCLEOTIDE SEQUENCE [MRNA] OF 1693-2701 (ISOFORM 1)</scope>
    <source>
        <strain>C3H/HeJ</strain>
        <tissue>Embryo</tissue>
    </source>
</reference>
<reference key="8">
    <citation type="journal article" date="1997" name="Biochem. J.">
        <title>Isoform diversity of the inositol trisphosphate receptor in cell types of mouse origin.</title>
        <authorList>
            <person name="De Smedt H."/>
            <person name="Missiaen L."/>
            <person name="Parys J.B."/>
            <person name="Henning R.H."/>
            <person name="Sienaert I."/>
            <person name="Vanlingen S."/>
            <person name="Gijsens A."/>
            <person name="Himpens B."/>
            <person name="Casteels R."/>
        </authorList>
    </citation>
    <scope>NUCLEOTIDE SEQUENCE [MRNA] OF 2238-2646 (ISOFORM 1)</scope>
    <source>
        <strain>C3H/HeJ</strain>
        <tissue>Embryo</tissue>
    </source>
</reference>
<reference key="9">
    <citation type="journal article" date="2007" name="Proc. Natl. Acad. Sci. U.S.A.">
        <title>Large-scale phosphorylation analysis of mouse liver.</title>
        <authorList>
            <person name="Villen J."/>
            <person name="Beausoleil S.A."/>
            <person name="Gerber S.A."/>
            <person name="Gygi S.P."/>
        </authorList>
    </citation>
    <scope>PHOSPHORYLATION [LARGE SCALE ANALYSIS] AT SER-937</scope>
    <scope>IDENTIFICATION BY MASS SPECTROMETRY [LARGE SCALE ANALYSIS]</scope>
    <source>
        <tissue>Liver</tissue>
    </source>
</reference>
<reference key="10">
    <citation type="journal article" date="2009" name="J. Biol. Chem.">
        <title>Protein kinase A increases type-2 inositol 1,4,5-trisphosphate receptor activity by phosphorylation of serine 937.</title>
        <authorList>
            <person name="Betzenhauser M.J."/>
            <person name="Fike J.L."/>
            <person name="Wagner L.E. II"/>
            <person name="Yule D.I."/>
        </authorList>
    </citation>
    <scope>PHOSPHORYLATION AT SER-937</scope>
    <scope>FUNCTION</scope>
    <scope>TRANSPORTER ACTIVITY</scope>
    <scope>MUTAGENESIS OF SER-937; SER-990; SER-1190; SER-1351; SER-1581 AND SER-2633</scope>
</reference>
<reference key="11">
    <citation type="journal article" date="2010" name="Cell">
        <title>A tissue-specific atlas of mouse protein phosphorylation and expression.</title>
        <authorList>
            <person name="Huttlin E.L."/>
            <person name="Jedrychowski M.P."/>
            <person name="Elias J.E."/>
            <person name="Goswami T."/>
            <person name="Rad R."/>
            <person name="Beausoleil S.A."/>
            <person name="Villen J."/>
            <person name="Haas W."/>
            <person name="Sowa M.E."/>
            <person name="Gygi S.P."/>
        </authorList>
    </citation>
    <scope>PHOSPHORYLATION [LARGE SCALE ANALYSIS] AT SER-937; SER-1709; SER-1711; SER-2633 AND SER-2636</scope>
    <scope>IDENTIFICATION BY MASS SPECTROMETRY [LARGE SCALE ANALYSIS]</scope>
    <source>
        <tissue>Brain</tissue>
        <tissue>Brown adipose tissue</tissue>
        <tissue>Heart</tissue>
        <tissue>Kidney</tissue>
        <tissue>Liver</tissue>
        <tissue>Lung</tissue>
        <tissue>Pancreas</tissue>
        <tissue>Spleen</tissue>
        <tissue>Testis</tissue>
    </source>
</reference>
<reference key="12">
    <citation type="journal article" date="2012" name="J. Physiol. (Lond.)">
        <title>Differential regulation of the InsP(3) receptor type-1 and -2 single channel properties by InsP(3), Ca2+ and ATP.</title>
        <authorList>
            <person name="Wagner L.E. II"/>
            <person name="Yule D.I."/>
        </authorList>
    </citation>
    <scope>FUNCTION</scope>
    <scope>TRANSPORTER ACTIVITY</scope>
    <scope>ACTIVITY REGULATION</scope>
</reference>
<reference key="13">
    <citation type="journal article" date="2014" name="J. Clin. Invest.">
        <title>Abolished InsP3R2 function inhibits sweat secretion in both humans and mice.</title>
        <authorList>
            <person name="Klar J."/>
            <person name="Hisatsune C."/>
            <person name="Baig S.M."/>
            <person name="Tariq M."/>
            <person name="Johansson A.C."/>
            <person name="Rasool M."/>
            <person name="Malik N.A."/>
            <person name="Ameur A."/>
            <person name="Sugiura K."/>
            <person name="Feuk L."/>
            <person name="Mikoshiba K."/>
            <person name="Dahl N."/>
        </authorList>
    </citation>
    <scope>DISRUPTION PHENOTYPE</scope>
    <scope>FUNCTION</scope>
    <scope>TRANSPORTER ACTIVITY</scope>
    <scope>MUTAGENESIS OF GLY-2498</scope>
</reference>
<gene>
    <name evidence="16" type="primary">Itpr2</name>
    <name type="synonym">Itpr5</name>
</gene>
<name>ITPR2_MOUSE</name>
<feature type="chain" id="PRO_0000153925" description="Inositol 1,4,5-trisphosphate-gated calcium channel ITPR2">
    <location>
        <begin position="1"/>
        <end position="2701"/>
    </location>
</feature>
<feature type="topological domain" description="Cytoplasmic" evidence="5">
    <location>
        <begin position="1"/>
        <end position="2227"/>
    </location>
</feature>
<feature type="transmembrane region" description="Helical" evidence="5">
    <location>
        <begin position="2228"/>
        <end position="2248"/>
    </location>
</feature>
<feature type="topological domain" description="Extracellular" evidence="5">
    <location>
        <begin position="2249"/>
        <end position="2260"/>
    </location>
</feature>
<feature type="transmembrane region" description="Helical" evidence="5">
    <location>
        <begin position="2261"/>
        <end position="2281"/>
    </location>
</feature>
<feature type="topological domain" description="Cytoplasmic" evidence="5">
    <location>
        <begin position="2282"/>
        <end position="2307"/>
    </location>
</feature>
<feature type="transmembrane region" description="Helical" evidence="5">
    <location>
        <begin position="2308"/>
        <end position="2328"/>
    </location>
</feature>
<feature type="topological domain" description="Extracellular" evidence="5">
    <location>
        <begin position="2329"/>
        <end position="2351"/>
    </location>
</feature>
<feature type="transmembrane region" description="Helical" evidence="5">
    <location>
        <begin position="2352"/>
        <end position="2372"/>
    </location>
</feature>
<feature type="topological domain" description="Cytoplasmic" evidence="5">
    <location>
        <begin position="2373"/>
        <end position="2394"/>
    </location>
</feature>
<feature type="transmembrane region" description="Helical" evidence="5">
    <location>
        <begin position="2395"/>
        <end position="2415"/>
    </location>
</feature>
<feature type="topological domain" description="Extracellular" evidence="5">
    <location>
        <begin position="2416"/>
        <end position="2520"/>
    </location>
</feature>
<feature type="transmembrane region" description="Helical" evidence="5">
    <location>
        <begin position="2521"/>
        <end position="2541"/>
    </location>
</feature>
<feature type="topological domain" description="Cytoplasmic" evidence="5">
    <location>
        <begin position="2542"/>
        <end position="2701"/>
    </location>
</feature>
<feature type="domain" description="MIR 1" evidence="6">
    <location>
        <begin position="112"/>
        <end position="166"/>
    </location>
</feature>
<feature type="domain" description="MIR 2" evidence="6">
    <location>
        <begin position="173"/>
        <end position="223"/>
    </location>
</feature>
<feature type="domain" description="MIR 3" evidence="6">
    <location>
        <begin position="231"/>
        <end position="287"/>
    </location>
</feature>
<feature type="domain" description="MIR 4" evidence="6">
    <location>
        <begin position="294"/>
        <end position="372"/>
    </location>
</feature>
<feature type="domain" description="MIR 5" evidence="6">
    <location>
        <begin position="378"/>
        <end position="434"/>
    </location>
</feature>
<feature type="region of interest" description="Disordered" evidence="7">
    <location>
        <begin position="1135"/>
        <end position="1174"/>
    </location>
</feature>
<feature type="binding site" evidence="3">
    <location>
        <position position="265"/>
    </location>
    <ligand>
        <name>1D-myo-inositol 1,4,5-trisphosphate</name>
        <dbReference type="ChEBI" id="CHEBI:203600"/>
    </ligand>
</feature>
<feature type="binding site" evidence="3">
    <location>
        <position position="267"/>
    </location>
    <ligand>
        <name>1D-myo-inositol 1,4,5-trisphosphate</name>
        <dbReference type="ChEBI" id="CHEBI:203600"/>
    </ligand>
</feature>
<feature type="binding site" evidence="3">
    <location>
        <position position="268"/>
    </location>
    <ligand>
        <name>1D-myo-inositol 1,4,5-trisphosphate</name>
        <dbReference type="ChEBI" id="CHEBI:203600"/>
    </ligand>
</feature>
<feature type="binding site" evidence="3">
    <location>
        <position position="269"/>
    </location>
    <ligand>
        <name>1D-myo-inositol 1,4,5-trisphosphate</name>
        <dbReference type="ChEBI" id="CHEBI:203600"/>
    </ligand>
</feature>
<feature type="binding site" evidence="3">
    <location>
        <position position="503"/>
    </location>
    <ligand>
        <name>1D-myo-inositol 1,4,5-trisphosphate</name>
        <dbReference type="ChEBI" id="CHEBI:203600"/>
    </ligand>
</feature>
<feature type="binding site" evidence="3">
    <location>
        <position position="507"/>
    </location>
    <ligand>
        <name>1D-myo-inositol 1,4,5-trisphosphate</name>
        <dbReference type="ChEBI" id="CHEBI:203600"/>
    </ligand>
</feature>
<feature type="binding site" evidence="3">
    <location>
        <position position="510"/>
    </location>
    <ligand>
        <name>1D-myo-inositol 1,4,5-trisphosphate</name>
        <dbReference type="ChEBI" id="CHEBI:203600"/>
    </ligand>
</feature>
<feature type="binding site" evidence="3">
    <location>
        <position position="567"/>
    </location>
    <ligand>
        <name>1D-myo-inositol 1,4,5-trisphosphate</name>
        <dbReference type="ChEBI" id="CHEBI:203600"/>
    </ligand>
</feature>
<feature type="binding site" evidence="3">
    <location>
        <position position="568"/>
    </location>
    <ligand>
        <name>1D-myo-inositol 1,4,5-trisphosphate</name>
        <dbReference type="ChEBI" id="CHEBI:203600"/>
    </ligand>
</feature>
<feature type="binding site" evidence="3">
    <location>
        <position position="569"/>
    </location>
    <ligand>
        <name>1D-myo-inositol 1,4,5-trisphosphate</name>
        <dbReference type="ChEBI" id="CHEBI:203600"/>
    </ligand>
</feature>
<feature type="binding site" evidence="3">
    <location>
        <position position="744"/>
    </location>
    <ligand>
        <name>Ca(2+)</name>
        <dbReference type="ChEBI" id="CHEBI:29108"/>
        <label>1</label>
        <note>low affinity</note>
    </ligand>
</feature>
<feature type="binding site" evidence="3">
    <location>
        <position position="1124"/>
    </location>
    <ligand>
        <name>Ca(2+)</name>
        <dbReference type="ChEBI" id="CHEBI:29108"/>
        <label>1</label>
        <note>low affinity</note>
    </ligand>
</feature>
<feature type="binding site" evidence="3">
    <location>
        <position position="1127"/>
    </location>
    <ligand>
        <name>Ca(2+)</name>
        <dbReference type="ChEBI" id="CHEBI:29108"/>
        <label>1</label>
        <note>low affinity</note>
    </ligand>
</feature>
<feature type="binding site" evidence="3">
    <location>
        <position position="1930"/>
    </location>
    <ligand>
        <name>Ca(2+)</name>
        <dbReference type="ChEBI" id="CHEBI:29108"/>
        <label>2</label>
        <note>high affinity</note>
    </ligand>
</feature>
<feature type="binding site" evidence="3">
    <location>
        <position position="1994"/>
    </location>
    <ligand>
        <name>Ca(2+)</name>
        <dbReference type="ChEBI" id="CHEBI:29108"/>
        <label>2</label>
        <note>high affinity</note>
    </ligand>
</feature>
<feature type="binding site" evidence="3">
    <location>
        <position position="2044"/>
    </location>
    <ligand>
        <name>ATP</name>
        <dbReference type="ChEBI" id="CHEBI:30616"/>
    </ligand>
</feature>
<feature type="binding site" evidence="3">
    <location>
        <position position="2177"/>
    </location>
    <ligand>
        <name>ATP</name>
        <dbReference type="ChEBI" id="CHEBI:30616"/>
    </ligand>
</feature>
<feature type="binding site" evidence="3">
    <location>
        <position position="2562"/>
    </location>
    <ligand>
        <name>ATP</name>
        <dbReference type="ChEBI" id="CHEBI:30616"/>
    </ligand>
</feature>
<feature type="binding site" evidence="3">
    <location>
        <position position="2562"/>
    </location>
    <ligand>
        <name>Zn(2+)</name>
        <dbReference type="ChEBI" id="CHEBI:29105"/>
    </ligand>
</feature>
<feature type="binding site" evidence="3">
    <location>
        <position position="2563"/>
    </location>
    <ligand>
        <name>ATP</name>
        <dbReference type="ChEBI" id="CHEBI:30616"/>
    </ligand>
</feature>
<feature type="binding site" evidence="3">
    <location>
        <position position="2565"/>
    </location>
    <ligand>
        <name>Zn(2+)</name>
        <dbReference type="ChEBI" id="CHEBI:29105"/>
    </ligand>
</feature>
<feature type="binding site" evidence="3">
    <location>
        <position position="2582"/>
    </location>
    <ligand>
        <name>Zn(2+)</name>
        <dbReference type="ChEBI" id="CHEBI:29105"/>
    </ligand>
</feature>
<feature type="binding site" evidence="3">
    <location>
        <position position="2584"/>
    </location>
    <ligand>
        <name>ATP</name>
        <dbReference type="ChEBI" id="CHEBI:30616"/>
    </ligand>
</feature>
<feature type="binding site" evidence="3">
    <location>
        <position position="2587"/>
    </location>
    <ligand>
        <name>ATP</name>
        <dbReference type="ChEBI" id="CHEBI:30616"/>
    </ligand>
</feature>
<feature type="binding site" evidence="3">
    <location>
        <position position="2587"/>
    </location>
    <ligand>
        <name>Zn(2+)</name>
        <dbReference type="ChEBI" id="CHEBI:29105"/>
    </ligand>
</feature>
<feature type="binding site" evidence="3">
    <location>
        <position position="2588"/>
    </location>
    <ligand>
        <name>ATP</name>
        <dbReference type="ChEBI" id="CHEBI:30616"/>
    </ligand>
</feature>
<feature type="binding site" evidence="3">
    <location>
        <position position="2589"/>
    </location>
    <ligand>
        <name>ATP</name>
        <dbReference type="ChEBI" id="CHEBI:30616"/>
    </ligand>
</feature>
<feature type="binding site" evidence="3">
    <location>
        <position position="2605"/>
    </location>
    <ligand>
        <name>Ca(2+)</name>
        <dbReference type="ChEBI" id="CHEBI:29108"/>
        <label>2</label>
        <note>high affinity</note>
    </ligand>
</feature>
<feature type="modified residue" description="Phosphoserine; by PKA" evidence="9 17 18">
    <location>
        <position position="937"/>
    </location>
</feature>
<feature type="modified residue" description="Phosphoserine" evidence="2">
    <location>
        <position position="1160"/>
    </location>
</feature>
<feature type="modified residue" description="Phosphoserine" evidence="18">
    <location>
        <position position="1709"/>
    </location>
</feature>
<feature type="modified residue" description="Phosphoserine" evidence="18">
    <location>
        <position position="1711"/>
    </location>
</feature>
<feature type="modified residue" description="Phosphotyrosine" evidence="5">
    <location>
        <position position="2607"/>
    </location>
</feature>
<feature type="modified residue" description="Phosphoserine" evidence="18">
    <location>
        <position position="2633"/>
    </location>
</feature>
<feature type="modified residue" description="Phosphoserine" evidence="18">
    <location>
        <position position="2636"/>
    </location>
</feature>
<feature type="splice variant" id="VSP_002701" description="In isoform 2." evidence="14">
    <original>N</original>
    <variation>NDMGAVI</variation>
    <location>
        <position position="175"/>
    </location>
</feature>
<feature type="splice variant" id="VSP_002702" description="In isoform 2." evidence="14">
    <location>
        <begin position="176"/>
        <end position="1281"/>
    </location>
</feature>
<feature type="splice variant" id="VSP_016026" description="In isoform 3." evidence="13">
    <location>
        <begin position="176"/>
        <end position="208"/>
    </location>
</feature>
<feature type="mutagenesis site" description="Loss of binding activity." evidence="8">
    <original>K</original>
    <variation>A</variation>
    <location>
        <position position="507"/>
    </location>
</feature>
<feature type="mutagenesis site" description="Loss of binding activity." evidence="8">
    <original>R</original>
    <variation>A</variation>
    <location>
        <position position="510"/>
    </location>
</feature>
<feature type="mutagenesis site" description="Abolishes PKA-mediated phosphorylation. No enhanced calcium release. Abolishes PKA-mediated phosphorylation: When associated with A-990; A-1190; A-1351 and A-1581." evidence="9">
    <original>S</original>
    <variation>A</variation>
    <location>
        <position position="937"/>
    </location>
</feature>
<feature type="mutagenesis site" description="No effect on PKA-mediated phosphorylation. Abolishes PKA-mediated phosphorylation: When associated with A-937; A-1190; A-1351 and A-1581." evidence="9">
    <original>S</original>
    <variation>A</variation>
    <location>
        <position position="990"/>
    </location>
</feature>
<feature type="mutagenesis site" description="No effect on PKA-mediated phosphorylation. Abolishes PKA-mediated phosphorylation: When associated with A-937; A-990; A-1351 and A-1581." evidence="9">
    <original>S</original>
    <variation>A</variation>
    <location>
        <position position="1190"/>
    </location>
</feature>
<feature type="mutagenesis site" description="No effect on PKA-mediated phosphorylation. Abolishes PKA-mediated phosphorylation: When associated with A-937; A-990; A-1190 and A-1581." evidence="9">
    <original>S</original>
    <variation>A</variation>
    <location>
        <position position="1351"/>
    </location>
</feature>
<feature type="mutagenesis site" description="No effect on PKA-mediated phosphorylation. Abolishes PKA-mediated phosphorylation: When associated with A-937; A-990; A-1190 and A-1351." evidence="9">
    <original>S</original>
    <variation>A</variation>
    <location>
        <position position="1581"/>
    </location>
</feature>
<feature type="mutagenesis site" description="Impairs inositol 1,4,5-trisphosphate-gated calcium channel activity." evidence="12">
    <original>G</original>
    <variation>S</variation>
    <location>
        <position position="2498"/>
    </location>
</feature>
<feature type="mutagenesis site" description="No effect on PKA-mediated phosphorylation. Enhanced calcium release on PKA activation." evidence="9">
    <original>S</original>
    <variation>A</variation>
    <location>
        <position position="2633"/>
    </location>
</feature>
<feature type="sequence conflict" description="In Ref. 6; AAH25805." evidence="15" ref="6">
    <original>I</original>
    <variation>V</variation>
    <location>
        <position position="1710"/>
    </location>
</feature>
<feature type="sequence conflict" description="In Ref. 6; AAH25805." evidence="15" ref="6">
    <original>S</original>
    <variation>G</variation>
    <location>
        <position position="1729"/>
    </location>
</feature>
<feature type="sequence conflict" description="In Ref. 6; AAH25805." evidence="15" ref="6">
    <original>K</original>
    <variation>T</variation>
    <location>
        <position position="1738"/>
    </location>
</feature>
<feature type="sequence conflict" description="In Ref. 7; CAA94861." evidence="15" ref="7">
    <original>F</original>
    <variation>L</variation>
    <location>
        <position position="2196"/>
    </location>
</feature>
<feature type="sequence conflict" description="In Ref. 6; AAH25805." evidence="15" ref="6">
    <original>S</original>
    <variation>P</variation>
    <location>
        <position position="2223"/>
    </location>
</feature>
<feature type="sequence conflict" description="In Ref. 6; AAH25805, 7; CAA94861 and 8; CAA83957." evidence="15" ref="6 7 8">
    <original>V</original>
    <variation>A</variation>
    <location>
        <position position="2265"/>
    </location>
</feature>
<proteinExistence type="evidence at protein level"/>
<sequence>MSDKMSSFLYIGDIVSLYAEGSVNGFISTLGLVDDRCVVHPEAGDLANPPKKFRDCLFKVCPMNRYSAQKQYWKAKQAKQGNHTEAALLKKLQHAAELEQKQNESENRKLLGEIVKYSNVIQLLHIKSNKYLTVNKRLPALLEKNAMRVSLDAAGNEGSWFYIHPFWKLRSEGDNIVVGDKVVLMPVNAGQPLHASNVELLDNPGCKEVNAVNCNTSWKITLFMKFSSYREDVLKGGDVVRLFHAEQEKFLTCDDYEKKQHIFLRTTLRQSATSATSSKALWEIEVVHHDPCRGGAGQWNSLFRFKHLATGNYLAAELNPDYRDAQNEGKNVKDGEIPTPKKKRQAGEKIMYTLVSVPHGNDIASLFELDATTLQRADCLVPRNSYVRLRHLCTNTWVTSTTIPIDTEEERPVMLKIGTCQTKEDKEAFAIVCVPLSEVRDLDFANDANKVLATTVKKLENGSITQNERRFVTKLLEDLIFFVADVTNNGQDVLDVVITKPNRERQKLMREQNILAQVFGILKAPFKEKAGEGSMLRLEDLGDQRYAPYKYVLRLCYRVLRHSQQDYRKNQEYIAKNFCVMQSQIGYDILAEDTITALLHNNRKLLEKHITAKEIETFVSLLRRNREPRFLDYLSDLCVSNSTAIPVTQELICKFMLSPGNADILIQTKLVSMQVENPMESSILPDDIDDEEVWLYWIDSNKEPHGKAIRHLAQEAREGTKADLEVLTYYRYQLNLFARMCLDRQYLAINQISTQLSVDLILRCVSDESLPFDLRASFCRLMLHMHVDRDPQESVVPVRYARLWTEIPTKITIHEYDSITDSSRNDMKRKFALTMEFVEEYLKEVVNQPFPFGDKEKNKLTFEVVHLARNLIYFGFYSFSELLRLTRTLLAILDIVQAPMSSYFERLSKFQDGSNNVMRTIHGVGEMMTQMVLSRGSIFPVSVPDAQPIVHPSKQASPGEQEDVTVMDTKLKVIEILQFILSVRLDYRISYMLSIYKKEFGDNNDNGDPSASGTPDTLLPSALVPDIDEIAAQAETMFAGRKEKTPVQLDDEGGRTFLRVLIHLIMHDYAPLLSGALQLLFKHFSQRAEVLQAFKQVQLLVSNQDVDNYKQIKADLDQLRLTVEKSELWVEKSGSYENGDVGEGQAKGGEEANEESNLLSPVQDGAKTPQIDSNKGNNYRIVKEILIRLSKLCVQNKKCRNQHQRLLKNMGAHSVVLDLLQIPYEKTDEKMNEVMDLAHTFLQNFCRGNPQNQVLLHKHLNLFLTPGLLEAETMRHIFMNNYHLCNEISERVVQHFVHCIETHGRHVEYLRFLQTIVKADGKYVKKCQDMVMTELINGGEDVLIFYNDRASFPILLNMMCSERARGDESGPLAYHITLVELLAACTEGKNVYTEIKCNSLLPLDDIVRVVTHDDCIPEVKIAYVNFVNHCYVDTEVEMKEIYTSNHIWKLFENFLVDMARVCNTTTDRKHADTFLERCVTESVMNIVSGFFNSPFSDNSTSLQTHQPVFIQLLQSAFRIYNCTWPNPAQKASVESCIRALAEVAKNRGIAIPVDLDSQVNTLFMKNHSSTVQRAAMGWRLSARSGPRFKEALGGPAWDYRNIIEKLQDVVASLEQQFSPMMQAEFSVLVDVLYSPELLFPEGSDARIRCGAFMSKLINHTKKLMEKEEKLCIKILQTLREMLEKKDSFMEEGSTLRRILLNRYFKGDHSISVNGPLSGAYAKTAQVGGSFSGQDSDKKGISMSDIQCLLDKEGASELVIDVIVNTKNDRIFSEGILLGIALLEGGNTQTQYSFYQQLHEQKKSEKFFKVLYDRMKAAQKEIRSTVTVNTIDLGSKKREEDSDVMALGPRMRVRDSSLHLREGMKGQLTEASSATSKAYCVYRREMDPEIDTMCPGQEAGSAEEKSAEEVTMSPAITIMRPILRFLQLLCENHNRELQNFLRNQNNKTNYNLVCETLQFLDCICGSTTGGLGLLGLYINERNVALVNQTLESLTEYCQGPCHENQTCIATHESNGIDIIIALILNDINPLGKYRMDLVLQLKNNASKLLLAIMESRHDSENAERILFNMRPRELVDVMKNAYNQGLECDHGDEEGGDDGVSPKDVGHNIYILAHQLARHNKLLQQMLKPGSDPEEGDEALKYYANHTAQIEIVRHDRTMEQIVFPVPNICEFLTRESKYRVFNTTERDEQGSKVNDFFQQTEDLYNEMKWQKKIRNNPALFWFSRHISLWGSISFNLAVFINLAVALFYPFGDDGDEGTLSPMFSVLLWVAVAICTSMLFFFSKPVGIRPFLVSVMLRSIYTIGLGPTLILLGAANLCNKIVFLVSFVGNRGTFTRGYRAVILDMAFLYHVAYVLVCMLGLFVHEFFYSFLLFDLVYREETLLNVIKSVTRNGRSIILTAVLALILVYLFSIIGFLFLKDDFTMEVDRLKNRTPVTGNHGVPTMTLSSMMETCQKENCSPTIPSSNTAGEEGEDGIERTCDTLLMCIVTVLNQGLRNGGGVGDVLRRPSKDEPLFAARVVYDLLFFFIVIIIVLNLIFGVIIDTFADLRSEKQKKEEILKTTCFICGLERDKFDNKTVSFEEHIKSEHNMWHYLYFIVLVKVKDPTEYTGPESYVAQMITEKNLDWFPRMRAMSLVSNEGDSEQNEIRNLQEKLESTMSLVKQLSGQLAELKEQMTEQRKNKQRLGFLGSNTPHVNHHMPPH</sequence>
<accession>Q9Z329</accession>
<accession>B2KF91</accession>
<accession>P70226</accession>
<accession>Q5DWM3</accession>
<accession>Q5DWM5</accession>
<accession>Q61744</accession>
<accession>Q8R3B0</accession>
<dbReference type="EMBL" id="AB182288">
    <property type="protein sequence ID" value="BAD90682.1"/>
    <property type="molecule type" value="mRNA"/>
</dbReference>
<dbReference type="EMBL" id="AB182290">
    <property type="protein sequence ID" value="BAD90684.1"/>
    <property type="molecule type" value="mRNA"/>
</dbReference>
<dbReference type="EMBL" id="AB012393">
    <property type="protein sequence ID" value="BAA33960.1"/>
    <property type="molecule type" value="mRNA"/>
</dbReference>
<dbReference type="EMBL" id="GU980658">
    <property type="protein sequence ID" value="ADG01867.1"/>
    <property type="molecule type" value="mRNA"/>
</dbReference>
<dbReference type="EMBL" id="CU207302">
    <property type="status" value="NOT_ANNOTATED_CDS"/>
    <property type="molecule type" value="Genomic_DNA"/>
</dbReference>
<dbReference type="EMBL" id="CU207317">
    <property type="status" value="NOT_ANNOTATED_CDS"/>
    <property type="molecule type" value="Genomic_DNA"/>
</dbReference>
<dbReference type="EMBL" id="CU207333">
    <property type="status" value="NOT_ANNOTATED_CDS"/>
    <property type="molecule type" value="Genomic_DNA"/>
</dbReference>
<dbReference type="EMBL" id="CH466572">
    <property type="protein sequence ID" value="EDL10703.1"/>
    <property type="molecule type" value="Genomic_DNA"/>
</dbReference>
<dbReference type="EMBL" id="BC025805">
    <property type="protein sequence ID" value="AAH25805.1"/>
    <property type="molecule type" value="mRNA"/>
</dbReference>
<dbReference type="EMBL" id="Z71173">
    <property type="protein sequence ID" value="CAA94861.1"/>
    <property type="molecule type" value="mRNA"/>
</dbReference>
<dbReference type="EMBL" id="Z33908">
    <property type="protein sequence ID" value="CAA83957.1"/>
    <property type="molecule type" value="mRNA"/>
</dbReference>
<dbReference type="CCDS" id="CCDS39708.1">
    <molecule id="Q9Z329-3"/>
</dbReference>
<dbReference type="CCDS" id="CCDS39709.1">
    <molecule id="Q9Z329-1"/>
</dbReference>
<dbReference type="PIR" id="I48607">
    <property type="entry name" value="I48607"/>
</dbReference>
<dbReference type="RefSeq" id="NP_034716.1">
    <molecule id="Q9Z329-3"/>
    <property type="nucleotide sequence ID" value="NM_010586.2"/>
</dbReference>
<dbReference type="RefSeq" id="NP_064307.2">
    <molecule id="Q9Z329-1"/>
    <property type="nucleotide sequence ID" value="NM_019923.4"/>
</dbReference>
<dbReference type="SMR" id="Q9Z329"/>
<dbReference type="BioGRID" id="200848">
    <property type="interactions" value="5"/>
</dbReference>
<dbReference type="CORUM" id="Q9Z329"/>
<dbReference type="FunCoup" id="Q9Z329">
    <property type="interactions" value="1755"/>
</dbReference>
<dbReference type="STRING" id="10090.ENSMUSP00000049584"/>
<dbReference type="GlyGen" id="Q9Z329">
    <property type="glycosylation" value="6 sites, 5 N-linked glycans (6 sites)"/>
</dbReference>
<dbReference type="iPTMnet" id="Q9Z329"/>
<dbReference type="PhosphoSitePlus" id="Q9Z329"/>
<dbReference type="SwissPalm" id="Q9Z329"/>
<dbReference type="jPOST" id="Q9Z329"/>
<dbReference type="PaxDb" id="10090-ENSMUSP00000049584"/>
<dbReference type="PeptideAtlas" id="Q9Z329"/>
<dbReference type="ProteomicsDB" id="269014">
    <molecule id="Q9Z329-1"/>
</dbReference>
<dbReference type="ProteomicsDB" id="269015">
    <molecule id="Q9Z329-2"/>
</dbReference>
<dbReference type="ProteomicsDB" id="269016">
    <molecule id="Q9Z329-3"/>
</dbReference>
<dbReference type="Pumba" id="Q9Z329"/>
<dbReference type="Antibodypedia" id="24309">
    <property type="antibodies" value="126 antibodies from 30 providers"/>
</dbReference>
<dbReference type="DNASU" id="16439"/>
<dbReference type="Ensembl" id="ENSMUST00000053273.15">
    <molecule id="Q9Z329-1"/>
    <property type="protein sequence ID" value="ENSMUSP00000049584.9"/>
    <property type="gene ID" value="ENSMUSG00000030287.16"/>
</dbReference>
<dbReference type="Ensembl" id="ENSMUST00000079573.13">
    <molecule id="Q9Z329-3"/>
    <property type="protein sequence ID" value="ENSMUSP00000078526.7"/>
    <property type="gene ID" value="ENSMUSG00000030287.16"/>
</dbReference>
<dbReference type="GeneID" id="16439"/>
<dbReference type="KEGG" id="mmu:16439"/>
<dbReference type="UCSC" id="uc009erw.2">
    <molecule id="Q9Z329-1"/>
    <property type="organism name" value="mouse"/>
</dbReference>
<dbReference type="UCSC" id="uc009erx.2">
    <molecule id="Q9Z329-3"/>
    <property type="organism name" value="mouse"/>
</dbReference>
<dbReference type="AGR" id="MGI:99418"/>
<dbReference type="CTD" id="3709"/>
<dbReference type="MGI" id="MGI:99418">
    <property type="gene designation" value="Itpr2"/>
</dbReference>
<dbReference type="VEuPathDB" id="HostDB:ENSMUSG00000030287"/>
<dbReference type="eggNOG" id="KOG3533">
    <property type="taxonomic scope" value="Eukaryota"/>
</dbReference>
<dbReference type="GeneTree" id="ENSGT00940000156039"/>
<dbReference type="HOGENOM" id="CLU_000206_1_0_1"/>
<dbReference type="InParanoid" id="Q9Z329"/>
<dbReference type="OMA" id="GTCEKDN"/>
<dbReference type="OrthoDB" id="300855at2759"/>
<dbReference type="PhylomeDB" id="Q9Z329"/>
<dbReference type="TreeFam" id="TF312815"/>
<dbReference type="Reactome" id="R-MMU-114508">
    <property type="pathway name" value="Effects of PIP2 hydrolysis"/>
</dbReference>
<dbReference type="Reactome" id="R-MMU-139853">
    <property type="pathway name" value="Elevation of cytosolic Ca2+ levels"/>
</dbReference>
<dbReference type="Reactome" id="R-MMU-381676">
    <property type="pathway name" value="Glucagon-like Peptide-1 (GLP1) regulates insulin secretion"/>
</dbReference>
<dbReference type="Reactome" id="R-MMU-5578775">
    <property type="pathway name" value="Ion homeostasis"/>
</dbReference>
<dbReference type="Reactome" id="R-MMU-983695">
    <property type="pathway name" value="Antigen activates B Cell Receptor (BCR) leading to generation of second messengers"/>
</dbReference>
<dbReference type="BioGRID-ORCS" id="16439">
    <property type="hits" value="1 hit in 79 CRISPR screens"/>
</dbReference>
<dbReference type="CD-CODE" id="CE726F99">
    <property type="entry name" value="Postsynaptic density"/>
</dbReference>
<dbReference type="ChiTaRS" id="Itpr2">
    <property type="organism name" value="mouse"/>
</dbReference>
<dbReference type="PRO" id="PR:Q9Z329"/>
<dbReference type="Proteomes" id="UP000000589">
    <property type="component" value="Chromosome 6"/>
</dbReference>
<dbReference type="RNAct" id="Q9Z329">
    <property type="molecule type" value="protein"/>
</dbReference>
<dbReference type="Bgee" id="ENSMUSG00000030287">
    <property type="expression patterns" value="Expressed in ileal epithelium and 245 other cell types or tissues"/>
</dbReference>
<dbReference type="ExpressionAtlas" id="Q9Z329">
    <property type="expression patterns" value="baseline and differential"/>
</dbReference>
<dbReference type="GO" id="GO:0005938">
    <property type="term" value="C:cell cortex"/>
    <property type="evidence" value="ECO:0000314"/>
    <property type="project" value="MGI"/>
</dbReference>
<dbReference type="GO" id="GO:0005737">
    <property type="term" value="C:cytoplasm"/>
    <property type="evidence" value="ECO:0000314"/>
    <property type="project" value="MGI"/>
</dbReference>
<dbReference type="GO" id="GO:0005783">
    <property type="term" value="C:endoplasmic reticulum"/>
    <property type="evidence" value="ECO:0000314"/>
    <property type="project" value="UniProtKB"/>
</dbReference>
<dbReference type="GO" id="GO:0005886">
    <property type="term" value="C:plasma membrane"/>
    <property type="evidence" value="ECO:0007669"/>
    <property type="project" value="Ensembl"/>
</dbReference>
<dbReference type="GO" id="GO:0043235">
    <property type="term" value="C:receptor complex"/>
    <property type="evidence" value="ECO:0000266"/>
    <property type="project" value="MGI"/>
</dbReference>
<dbReference type="GO" id="GO:0016529">
    <property type="term" value="C:sarcoplasmic reticulum"/>
    <property type="evidence" value="ECO:0000314"/>
    <property type="project" value="MGI"/>
</dbReference>
<dbReference type="GO" id="GO:0033017">
    <property type="term" value="C:sarcoplasmic reticulum membrane"/>
    <property type="evidence" value="ECO:0007669"/>
    <property type="project" value="Ensembl"/>
</dbReference>
<dbReference type="GO" id="GO:0030658">
    <property type="term" value="C:transport vesicle membrane"/>
    <property type="evidence" value="ECO:0007669"/>
    <property type="project" value="UniProtKB-SubCell"/>
</dbReference>
<dbReference type="GO" id="GO:0005524">
    <property type="term" value="F:ATP binding"/>
    <property type="evidence" value="ECO:0007669"/>
    <property type="project" value="UniProtKB-KW"/>
</dbReference>
<dbReference type="GO" id="GO:0070679">
    <property type="term" value="F:inositol 1,4,5 trisphosphate binding"/>
    <property type="evidence" value="ECO:0007669"/>
    <property type="project" value="InterPro"/>
</dbReference>
<dbReference type="GO" id="GO:0005220">
    <property type="term" value="F:inositol 1,4,5-trisphosphate-gated calcium channel activity"/>
    <property type="evidence" value="ECO:0000314"/>
    <property type="project" value="UniProtKB"/>
</dbReference>
<dbReference type="GO" id="GO:0015278">
    <property type="term" value="F:intracellularly gated calcium channel activity"/>
    <property type="evidence" value="ECO:0000314"/>
    <property type="project" value="MGI"/>
</dbReference>
<dbReference type="GO" id="GO:0046872">
    <property type="term" value="F:metal ion binding"/>
    <property type="evidence" value="ECO:0007669"/>
    <property type="project" value="UniProtKB-KW"/>
</dbReference>
<dbReference type="GO" id="GO:0035091">
    <property type="term" value="F:phosphatidylinositol binding"/>
    <property type="evidence" value="ECO:0000314"/>
    <property type="project" value="MGI"/>
</dbReference>
<dbReference type="GO" id="GO:0097110">
    <property type="term" value="F:scaffold protein binding"/>
    <property type="evidence" value="ECO:0007669"/>
    <property type="project" value="Ensembl"/>
</dbReference>
<dbReference type="GO" id="GO:0044325">
    <property type="term" value="F:transmembrane transporter binding"/>
    <property type="evidence" value="ECO:0007669"/>
    <property type="project" value="Ensembl"/>
</dbReference>
<dbReference type="GO" id="GO:0006816">
    <property type="term" value="P:calcium ion transport"/>
    <property type="evidence" value="ECO:0000314"/>
    <property type="project" value="MGI"/>
</dbReference>
<dbReference type="GO" id="GO:0071320">
    <property type="term" value="P:cellular response to cAMP"/>
    <property type="evidence" value="ECO:0000314"/>
    <property type="project" value="UniProtKB"/>
</dbReference>
<dbReference type="GO" id="GO:0071361">
    <property type="term" value="P:cellular response to ethanol"/>
    <property type="evidence" value="ECO:0000315"/>
    <property type="project" value="MGI"/>
</dbReference>
<dbReference type="GO" id="GO:0051209">
    <property type="term" value="P:release of sequestered calcium ion into cytosol"/>
    <property type="evidence" value="ECO:0000314"/>
    <property type="project" value="UniProtKB"/>
</dbReference>
<dbReference type="GO" id="GO:0001666">
    <property type="term" value="P:response to hypoxia"/>
    <property type="evidence" value="ECO:0007669"/>
    <property type="project" value="Ensembl"/>
</dbReference>
<dbReference type="CDD" id="cd23288">
    <property type="entry name" value="beta-trefoil_MIR_ITPR2"/>
    <property type="match status" value="1"/>
</dbReference>
<dbReference type="FunFam" id="2.80.10.50:FF:000002">
    <property type="entry name" value="Inositol 1,4,5-trisphosphate receptor type 2"/>
    <property type="match status" value="1"/>
</dbReference>
<dbReference type="FunFam" id="2.80.10.50:FF:000005">
    <property type="entry name" value="Inositol 1,4,5-trisphosphate receptor type 2"/>
    <property type="match status" value="1"/>
</dbReference>
<dbReference type="FunFam" id="1.10.287.70:FF:000079">
    <property type="entry name" value="Inositol 1,4,5-trisphosphate receptor type 3"/>
    <property type="match status" value="1"/>
</dbReference>
<dbReference type="FunFam" id="1.25.10.30:FF:000001">
    <property type="entry name" value="Inositol 1,4,5-trisphosphate receptor, type 2"/>
    <property type="match status" value="1"/>
</dbReference>
<dbReference type="Gene3D" id="1.10.287.70">
    <property type="match status" value="1"/>
</dbReference>
<dbReference type="Gene3D" id="2.80.10.50">
    <property type="match status" value="2"/>
</dbReference>
<dbReference type="Gene3D" id="1.25.10.30">
    <property type="entry name" value="IP3 receptor type 1 binding core, RIH domain"/>
    <property type="match status" value="1"/>
</dbReference>
<dbReference type="InterPro" id="IPR016024">
    <property type="entry name" value="ARM-type_fold"/>
</dbReference>
<dbReference type="InterPro" id="IPR014821">
    <property type="entry name" value="Ins145_P3_rcpt"/>
</dbReference>
<dbReference type="InterPro" id="IPR000493">
    <property type="entry name" value="InsP3_rcpt"/>
</dbReference>
<dbReference type="InterPro" id="IPR005821">
    <property type="entry name" value="Ion_trans_dom"/>
</dbReference>
<dbReference type="InterPro" id="IPR036300">
    <property type="entry name" value="MIR_dom_sf"/>
</dbReference>
<dbReference type="InterPro" id="IPR016093">
    <property type="entry name" value="MIR_motif"/>
</dbReference>
<dbReference type="InterPro" id="IPR013662">
    <property type="entry name" value="RIH_assoc-dom"/>
</dbReference>
<dbReference type="InterPro" id="IPR000699">
    <property type="entry name" value="RIH_dom"/>
</dbReference>
<dbReference type="InterPro" id="IPR015925">
    <property type="entry name" value="Ryanodine_IP3_receptor"/>
</dbReference>
<dbReference type="InterPro" id="IPR035910">
    <property type="entry name" value="RyR/IP3R_RIH_dom_sf"/>
</dbReference>
<dbReference type="PANTHER" id="PTHR45816:SF3">
    <property type="entry name" value="INOSITOL 1,4,5-TRISPHOSPHATE RECEPTOR"/>
    <property type="match status" value="1"/>
</dbReference>
<dbReference type="PANTHER" id="PTHR45816">
    <property type="entry name" value="MIR DOMAIN-CONTAINING PROTEIN"/>
    <property type="match status" value="1"/>
</dbReference>
<dbReference type="Pfam" id="PF08709">
    <property type="entry name" value="Ins145_P3_rec"/>
    <property type="match status" value="1"/>
</dbReference>
<dbReference type="Pfam" id="PF00520">
    <property type="entry name" value="Ion_trans"/>
    <property type="match status" value="1"/>
</dbReference>
<dbReference type="Pfam" id="PF02815">
    <property type="entry name" value="MIR"/>
    <property type="match status" value="1"/>
</dbReference>
<dbReference type="Pfam" id="PF08454">
    <property type="entry name" value="RIH_assoc"/>
    <property type="match status" value="1"/>
</dbReference>
<dbReference type="Pfam" id="PF01365">
    <property type="entry name" value="RYDR_ITPR"/>
    <property type="match status" value="2"/>
</dbReference>
<dbReference type="PRINTS" id="PR00779">
    <property type="entry name" value="INSP3RECEPTR"/>
</dbReference>
<dbReference type="SMART" id="SM00472">
    <property type="entry name" value="MIR"/>
    <property type="match status" value="4"/>
</dbReference>
<dbReference type="SUPFAM" id="SSF48371">
    <property type="entry name" value="ARM repeat"/>
    <property type="match status" value="1"/>
</dbReference>
<dbReference type="SUPFAM" id="SSF100909">
    <property type="entry name" value="IP3 receptor type 1 binding core, domain 2"/>
    <property type="match status" value="2"/>
</dbReference>
<dbReference type="SUPFAM" id="SSF82109">
    <property type="entry name" value="MIR domain"/>
    <property type="match status" value="2"/>
</dbReference>
<dbReference type="PROSITE" id="PS50919">
    <property type="entry name" value="MIR"/>
    <property type="match status" value="5"/>
</dbReference>
<evidence type="ECO:0000250" key="1">
    <source>
        <dbReference type="UniProtKB" id="P29995"/>
    </source>
</evidence>
<evidence type="ECO:0000250" key="2">
    <source>
        <dbReference type="UniProtKB" id="Q14571"/>
    </source>
</evidence>
<evidence type="ECO:0000250" key="3">
    <source>
        <dbReference type="UniProtKB" id="Q14573"/>
    </source>
</evidence>
<evidence type="ECO:0000250" key="4">
    <source>
        <dbReference type="UniProtKB" id="Q8WN96"/>
    </source>
</evidence>
<evidence type="ECO:0000255" key="5"/>
<evidence type="ECO:0000255" key="6">
    <source>
        <dbReference type="PROSITE-ProRule" id="PRU00131"/>
    </source>
</evidence>
<evidence type="ECO:0000256" key="7">
    <source>
        <dbReference type="SAM" id="MobiDB-lite"/>
    </source>
</evidence>
<evidence type="ECO:0000269" key="8">
    <source>
    </source>
</evidence>
<evidence type="ECO:0000269" key="9">
    <source>
    </source>
</evidence>
<evidence type="ECO:0000269" key="10">
    <source>
    </source>
</evidence>
<evidence type="ECO:0000269" key="11">
    <source>
    </source>
</evidence>
<evidence type="ECO:0000269" key="12">
    <source>
    </source>
</evidence>
<evidence type="ECO:0000303" key="13">
    <source>
    </source>
</evidence>
<evidence type="ECO:0000303" key="14">
    <source>
    </source>
</evidence>
<evidence type="ECO:0000305" key="15"/>
<evidence type="ECO:0000312" key="16">
    <source>
        <dbReference type="MGI" id="MGI:99418"/>
    </source>
</evidence>
<evidence type="ECO:0007744" key="17">
    <source>
    </source>
</evidence>
<evidence type="ECO:0007744" key="18">
    <source>
    </source>
</evidence>